<accession>P0C331</accession>
<accession>P12130</accession>
<accession>Q6QY34</accession>
<accession>Q6Z1V8</accession>
<feature type="chain" id="PRO_0000288699" description="NAD(P)H-quinone oxidoreductase subunit 6, chloroplastic">
    <location>
        <begin position="1"/>
        <end position="176"/>
    </location>
</feature>
<feature type="transmembrane region" description="Helical" evidence="2">
    <location>
        <begin position="10"/>
        <end position="30"/>
    </location>
</feature>
<feature type="transmembrane region" description="Helical" evidence="2">
    <location>
        <begin position="33"/>
        <end position="53"/>
    </location>
</feature>
<feature type="transmembrane region" description="Helical" evidence="2">
    <location>
        <begin position="60"/>
        <end position="80"/>
    </location>
</feature>
<feature type="transmembrane region" description="Helical" evidence="2">
    <location>
        <begin position="92"/>
        <end position="112"/>
    </location>
</feature>
<feature type="transmembrane region" description="Helical" evidence="2">
    <location>
        <begin position="152"/>
        <end position="172"/>
    </location>
</feature>
<keyword id="KW-0150">Chloroplast</keyword>
<keyword id="KW-0472">Membrane</keyword>
<keyword id="KW-0520">NAD</keyword>
<keyword id="KW-0521">NADP</keyword>
<keyword id="KW-0934">Plastid</keyword>
<keyword id="KW-0618">Plastoquinone</keyword>
<keyword id="KW-0874">Quinone</keyword>
<keyword id="KW-1185">Reference proteome</keyword>
<keyword id="KW-0793">Thylakoid</keyword>
<keyword id="KW-1278">Translocase</keyword>
<keyword id="KW-0812">Transmembrane</keyword>
<keyword id="KW-1133">Transmembrane helix</keyword>
<keyword id="KW-0813">Transport</keyword>
<dbReference type="EC" id="7.1.1.-"/>
<dbReference type="EMBL" id="X15901">
    <property type="protein sequence ID" value="CAA33908.1"/>
    <property type="molecule type" value="Genomic_DNA"/>
</dbReference>
<dbReference type="EMBL" id="AY522330">
    <property type="protein sequence ID" value="AAS46160.1"/>
    <property type="molecule type" value="Genomic_DNA"/>
</dbReference>
<dbReference type="EMBL" id="AP005408">
    <property type="protein sequence ID" value="BAD17337.1"/>
    <property type="molecule type" value="Genomic_DNA"/>
</dbReference>
<dbReference type="EMBL" id="AP005408">
    <property type="protein sequence ID" value="BAD17340.1"/>
    <property type="molecule type" value="Genomic_DNA"/>
</dbReference>
<dbReference type="PIR" id="JQ0292">
    <property type="entry name" value="DERZN6"/>
</dbReference>
<dbReference type="RefSeq" id="NP_039447.1">
    <property type="nucleotide sequence ID" value="NC_001320.1"/>
</dbReference>
<dbReference type="SMR" id="P0C331"/>
<dbReference type="FunCoup" id="P0C331">
    <property type="interactions" value="13"/>
</dbReference>
<dbReference type="STRING" id="39947.P0C331"/>
<dbReference type="PaxDb" id="39947-P0C331"/>
<dbReference type="EnsemblPlants" id="transcript-ndhG">
    <property type="protein sequence ID" value="cds-CAA33908.1"/>
    <property type="gene ID" value="gene-ndhG"/>
</dbReference>
<dbReference type="GeneID" id="3131401"/>
<dbReference type="Gramene" id="transcript-ndhG">
    <property type="protein sequence ID" value="cds-CAA33908.1"/>
    <property type="gene ID" value="gene-ndhG"/>
</dbReference>
<dbReference type="KEGG" id="dosa:ndhG"/>
<dbReference type="KEGG" id="osa:3131401"/>
<dbReference type="InParanoid" id="P0C331"/>
<dbReference type="OrthoDB" id="655704at2759"/>
<dbReference type="Proteomes" id="UP000000763">
    <property type="component" value="Chromosome 2"/>
</dbReference>
<dbReference type="Proteomes" id="UP000059680">
    <property type="component" value="Chloroplast"/>
</dbReference>
<dbReference type="GO" id="GO:0009535">
    <property type="term" value="C:chloroplast thylakoid membrane"/>
    <property type="evidence" value="ECO:0007669"/>
    <property type="project" value="UniProtKB-SubCell"/>
</dbReference>
<dbReference type="GO" id="GO:0009536">
    <property type="term" value="C:plastid"/>
    <property type="evidence" value="ECO:0000305"/>
    <property type="project" value="Gramene"/>
</dbReference>
<dbReference type="GO" id="GO:0008137">
    <property type="term" value="F:NADH dehydrogenase (ubiquinone) activity"/>
    <property type="evidence" value="ECO:0007669"/>
    <property type="project" value="InterPro"/>
</dbReference>
<dbReference type="GO" id="GO:0048038">
    <property type="term" value="F:quinone binding"/>
    <property type="evidence" value="ECO:0007669"/>
    <property type="project" value="UniProtKB-KW"/>
</dbReference>
<dbReference type="FunFam" id="1.20.120.1200:FF:000002">
    <property type="entry name" value="NAD(P)H-quinone oxidoreductase subunit 6, chloroplastic"/>
    <property type="match status" value="1"/>
</dbReference>
<dbReference type="Gene3D" id="1.20.120.1200">
    <property type="entry name" value="NADH-ubiquinone/plastoquinone oxidoreductase chain 6, subunit NuoJ"/>
    <property type="match status" value="1"/>
</dbReference>
<dbReference type="InterPro" id="IPR050290">
    <property type="entry name" value="NAD(P)H-Q_Oxidoreduct_6"/>
</dbReference>
<dbReference type="InterPro" id="IPR001457">
    <property type="entry name" value="NADH_UbQ/plastoQ_OxRdtase_su6"/>
</dbReference>
<dbReference type="InterPro" id="IPR042106">
    <property type="entry name" value="Nuo/plastoQ_OxRdtase_6_NuoJ"/>
</dbReference>
<dbReference type="PANTHER" id="PTHR48479">
    <property type="entry name" value="NAD(P)H-QUINONE OXIDOREDUCTASE SUBUNIT 6, CHLOROPLASTIC"/>
    <property type="match status" value="1"/>
</dbReference>
<dbReference type="PANTHER" id="PTHR48479:SF1">
    <property type="entry name" value="NAD(P)H-QUINONE OXIDOREDUCTASE SUBUNIT 6, CHLOROPLASTIC"/>
    <property type="match status" value="1"/>
</dbReference>
<dbReference type="Pfam" id="PF00499">
    <property type="entry name" value="Oxidored_q3"/>
    <property type="match status" value="1"/>
</dbReference>
<comment type="function">
    <text evidence="1">NDH shuttles electrons from NAD(P)H:plastoquinone, via FMN and iron-sulfur (Fe-S) centers, to quinones in the photosynthetic chain and possibly in a chloroplast respiratory chain. The immediate electron acceptor for the enzyme in this species is believed to be plastoquinone. Couples the redox reaction to proton translocation, and thus conserves the redox energy in a proton gradient (By similarity).</text>
</comment>
<comment type="catalytic activity">
    <reaction>
        <text>a plastoquinone + NADH + (n+1) H(+)(in) = a plastoquinol + NAD(+) + n H(+)(out)</text>
        <dbReference type="Rhea" id="RHEA:42608"/>
        <dbReference type="Rhea" id="RHEA-COMP:9561"/>
        <dbReference type="Rhea" id="RHEA-COMP:9562"/>
        <dbReference type="ChEBI" id="CHEBI:15378"/>
        <dbReference type="ChEBI" id="CHEBI:17757"/>
        <dbReference type="ChEBI" id="CHEBI:57540"/>
        <dbReference type="ChEBI" id="CHEBI:57945"/>
        <dbReference type="ChEBI" id="CHEBI:62192"/>
    </reaction>
</comment>
<comment type="catalytic activity">
    <reaction>
        <text>a plastoquinone + NADPH + (n+1) H(+)(in) = a plastoquinol + NADP(+) + n H(+)(out)</text>
        <dbReference type="Rhea" id="RHEA:42612"/>
        <dbReference type="Rhea" id="RHEA-COMP:9561"/>
        <dbReference type="Rhea" id="RHEA-COMP:9562"/>
        <dbReference type="ChEBI" id="CHEBI:15378"/>
        <dbReference type="ChEBI" id="CHEBI:17757"/>
        <dbReference type="ChEBI" id="CHEBI:57783"/>
        <dbReference type="ChEBI" id="CHEBI:58349"/>
        <dbReference type="ChEBI" id="CHEBI:62192"/>
    </reaction>
</comment>
<comment type="subunit">
    <text evidence="1">NDH is composed of at least 16 different subunits, 5 of which are encoded in the nucleus.</text>
</comment>
<comment type="subcellular location">
    <subcellularLocation>
        <location evidence="1">Plastid</location>
        <location evidence="1">Chloroplast thylakoid membrane</location>
        <topology evidence="1">Multi-pass membrane protein</topology>
    </subcellularLocation>
</comment>
<comment type="similarity">
    <text evidence="3">Belongs to the complex I subunit 6 family.</text>
</comment>
<comment type="caution">
    <text evidence="3">A stretch of the chloroplast genome is duplicated within chromosome 2 resulting in the duplication of the gene. The expression of this duplicated gene has not been demonstrated.</text>
</comment>
<name>NU6C_ORYSJ</name>
<organism>
    <name type="scientific">Oryza sativa subsp. japonica</name>
    <name type="common">Rice</name>
    <dbReference type="NCBI Taxonomy" id="39947"/>
    <lineage>
        <taxon>Eukaryota</taxon>
        <taxon>Viridiplantae</taxon>
        <taxon>Streptophyta</taxon>
        <taxon>Embryophyta</taxon>
        <taxon>Tracheophyta</taxon>
        <taxon>Spermatophyta</taxon>
        <taxon>Magnoliopsida</taxon>
        <taxon>Liliopsida</taxon>
        <taxon>Poales</taxon>
        <taxon>Poaceae</taxon>
        <taxon>BOP clade</taxon>
        <taxon>Oryzoideae</taxon>
        <taxon>Oryzeae</taxon>
        <taxon>Oryzinae</taxon>
        <taxon>Oryza</taxon>
        <taxon>Oryza sativa</taxon>
    </lineage>
</organism>
<proteinExistence type="inferred from homology"/>
<protein>
    <recommendedName>
        <fullName>NAD(P)H-quinone oxidoreductase subunit 6, chloroplastic</fullName>
        <ecNumber>7.1.1.-</ecNumber>
    </recommendedName>
    <alternativeName>
        <fullName>NAD(P)H dehydrogenase subunit 6</fullName>
    </alternativeName>
    <alternativeName>
        <fullName>NADH-plastoquinone oxidoreductase subunit 6</fullName>
    </alternativeName>
</protein>
<evidence type="ECO:0000250" key="1"/>
<evidence type="ECO:0000255" key="2"/>
<evidence type="ECO:0000305" key="3"/>
<sequence>MDLPGPIHEILVLFGGFVLLLGGLGVVLLTNPTFSAFSLGLVLVCISLFYILLNSYFVAVAQLLIYVGAINVLIIFAVMFVNGSEWSKDKNFWTIGDGFTSLVCITIPFSLMTTIPDTSWYGILWTTRSNQIVEQGLINNVQQIGIHLATDFYLPFELISIILLVSLIGAITMARQ</sequence>
<geneLocation type="chloroplast"/>
<reference key="1">
    <citation type="journal article" date="1989" name="Mol. Gen. Genet.">
        <title>The complete sequence of the rice (Oryza sativa) chloroplast genome: intermolecular recombination between distinct tRNA genes accounts for a major plastid DNA inversion during the evolution of the cereals.</title>
        <authorList>
            <person name="Hiratsuka J."/>
            <person name="Shimada H."/>
            <person name="Whittier R."/>
            <person name="Ishibashi T."/>
            <person name="Sakamoto M."/>
            <person name="Mori M."/>
            <person name="Kondo C."/>
            <person name="Honji Y."/>
            <person name="Sun C.-R."/>
            <person name="Meng B.-Y."/>
            <person name="Li Y.-Q."/>
            <person name="Kanno A."/>
            <person name="Nishizawa Y."/>
            <person name="Hirai A."/>
            <person name="Shinozaki K."/>
            <person name="Sugiura M."/>
        </authorList>
    </citation>
    <scope>NUCLEOTIDE SEQUENCE [LARGE SCALE GENOMIC DNA]</scope>
    <source>
        <strain>cv. Nipponbare</strain>
    </source>
</reference>
<reference key="2">
    <citation type="journal article" date="2004" name="Plant Physiol.">
        <title>A comparison of rice chloroplast genomes.</title>
        <authorList>
            <person name="Tang J."/>
            <person name="Xia H."/>
            <person name="Cao M."/>
            <person name="Zhang X."/>
            <person name="Zeng W."/>
            <person name="Hu S."/>
            <person name="Tong W."/>
            <person name="Wang J."/>
            <person name="Wang J."/>
            <person name="Yu J."/>
            <person name="Yang H."/>
            <person name="Zhu L."/>
        </authorList>
    </citation>
    <scope>NUCLEOTIDE SEQUENCE [LARGE SCALE GENOMIC DNA]</scope>
    <source>
        <strain>cv. Nipponbare</strain>
    </source>
</reference>
<reference key="3">
    <citation type="journal article" date="2005" name="Nature">
        <title>The map-based sequence of the rice genome.</title>
        <authorList>
            <consortium name="International rice genome sequencing project (IRGSP)"/>
        </authorList>
    </citation>
    <scope>NUCLEOTIDE SEQUENCE [LARGE SCALE GENOMIC DNA]</scope>
    <source>
        <strain>cv. Nipponbare</strain>
    </source>
</reference>
<gene>
    <name type="primary">ndhG</name>
    <name type="ORF">Nip172</name>
</gene>